<gene>
    <name type="ordered locus">aq_377</name>
</gene>
<keyword id="KW-1185">Reference proteome</keyword>
<protein>
    <recommendedName>
        <fullName>Uncharacterized protein aq_377</fullName>
    </recommendedName>
</protein>
<accession>O66699</accession>
<proteinExistence type="predicted"/>
<sequence>MNEILKTEDEVVRWSVKKINDDTTLIEFELKRDLVPEDLKKINPPDAVKNKFANTFIVLSGRGPIWLYGFLIHFYHPTKGIGVFDPRLGGAVVVSSHSPNKKVGDVIKWEG</sequence>
<dbReference type="EMBL" id="AE000657">
    <property type="protein sequence ID" value="AAC06660.1"/>
    <property type="molecule type" value="Genomic_DNA"/>
</dbReference>
<dbReference type="PIR" id="G70333">
    <property type="entry name" value="G70333"/>
</dbReference>
<dbReference type="RefSeq" id="NP_213259.1">
    <property type="nucleotide sequence ID" value="NC_000918.1"/>
</dbReference>
<dbReference type="RefSeq" id="WP_010880197.1">
    <property type="nucleotide sequence ID" value="NC_000918.1"/>
</dbReference>
<dbReference type="SMR" id="O66699"/>
<dbReference type="STRING" id="224324.aq_377"/>
<dbReference type="EnsemblBacteria" id="AAC06660">
    <property type="protein sequence ID" value="AAC06660"/>
    <property type="gene ID" value="aq_377"/>
</dbReference>
<dbReference type="KEGG" id="aae:aq_377"/>
<dbReference type="PATRIC" id="fig|224324.8.peg.306"/>
<dbReference type="eggNOG" id="ENOG5032VFT">
    <property type="taxonomic scope" value="Bacteria"/>
</dbReference>
<dbReference type="HOGENOM" id="CLU_172322_0_0_0"/>
<dbReference type="InParanoid" id="O66699"/>
<dbReference type="OrthoDB" id="9810787at2"/>
<dbReference type="Proteomes" id="UP000000798">
    <property type="component" value="Chromosome"/>
</dbReference>
<dbReference type="CDD" id="cd09681">
    <property type="entry name" value="Csx3_III-U"/>
    <property type="match status" value="1"/>
</dbReference>
<dbReference type="InterPro" id="IPR013409">
    <property type="entry name" value="CRISPR-assoc_prot_Crn3/Csx3"/>
</dbReference>
<dbReference type="NCBIfam" id="TIGR02579">
    <property type="entry name" value="cas_csx3"/>
    <property type="match status" value="1"/>
</dbReference>
<dbReference type="Pfam" id="PF09620">
    <property type="entry name" value="Cas_csx3"/>
    <property type="match status" value="1"/>
</dbReference>
<comment type="similarity">
    <text evidence="1">To A.fulgidus AF1864.</text>
</comment>
<name>Y377_AQUAE</name>
<reference key="1">
    <citation type="journal article" date="1998" name="Nature">
        <title>The complete genome of the hyperthermophilic bacterium Aquifex aeolicus.</title>
        <authorList>
            <person name="Deckert G."/>
            <person name="Warren P.V."/>
            <person name="Gaasterland T."/>
            <person name="Young W.G."/>
            <person name="Lenox A.L."/>
            <person name="Graham D.E."/>
            <person name="Overbeek R."/>
            <person name="Snead M.A."/>
            <person name="Keller M."/>
            <person name="Aujay M."/>
            <person name="Huber R."/>
            <person name="Feldman R.A."/>
            <person name="Short J.M."/>
            <person name="Olsen G.J."/>
            <person name="Swanson R.V."/>
        </authorList>
    </citation>
    <scope>NUCLEOTIDE SEQUENCE [LARGE SCALE GENOMIC DNA]</scope>
    <source>
        <strain>VF5</strain>
    </source>
</reference>
<evidence type="ECO:0000305" key="1"/>
<organism>
    <name type="scientific">Aquifex aeolicus (strain VF5)</name>
    <dbReference type="NCBI Taxonomy" id="224324"/>
    <lineage>
        <taxon>Bacteria</taxon>
        <taxon>Pseudomonadati</taxon>
        <taxon>Aquificota</taxon>
        <taxon>Aquificia</taxon>
        <taxon>Aquificales</taxon>
        <taxon>Aquificaceae</taxon>
        <taxon>Aquifex</taxon>
    </lineage>
</organism>
<feature type="chain" id="PRO_0000186857" description="Uncharacterized protein aq_377">
    <location>
        <begin position="1"/>
        <end position="111"/>
    </location>
</feature>